<protein>
    <recommendedName>
        <fullName evidence="1">Glutamyl-tRNA(Gln) amidotransferase subunit A</fullName>
        <shortName evidence="1">Glu-ADT subunit A</shortName>
        <ecNumber evidence="1">6.3.5.7</ecNumber>
    </recommendedName>
</protein>
<organism>
    <name type="scientific">Francisella tularensis subsp. mediasiatica (strain FSC147)</name>
    <dbReference type="NCBI Taxonomy" id="441952"/>
    <lineage>
        <taxon>Bacteria</taxon>
        <taxon>Pseudomonadati</taxon>
        <taxon>Pseudomonadota</taxon>
        <taxon>Gammaproteobacteria</taxon>
        <taxon>Thiotrichales</taxon>
        <taxon>Francisellaceae</taxon>
        <taxon>Francisella</taxon>
    </lineage>
</organism>
<name>GATA_FRATM</name>
<dbReference type="EC" id="6.3.5.7" evidence="1"/>
<dbReference type="EMBL" id="CP000915">
    <property type="protein sequence ID" value="ACD30185.1"/>
    <property type="molecule type" value="Genomic_DNA"/>
</dbReference>
<dbReference type="SMR" id="B2SEM6"/>
<dbReference type="KEGG" id="ftm:FTM_0084"/>
<dbReference type="HOGENOM" id="CLU_009600_0_3_6"/>
<dbReference type="GO" id="GO:0030956">
    <property type="term" value="C:glutamyl-tRNA(Gln) amidotransferase complex"/>
    <property type="evidence" value="ECO:0007669"/>
    <property type="project" value="InterPro"/>
</dbReference>
<dbReference type="GO" id="GO:0005524">
    <property type="term" value="F:ATP binding"/>
    <property type="evidence" value="ECO:0007669"/>
    <property type="project" value="UniProtKB-KW"/>
</dbReference>
<dbReference type="GO" id="GO:0050567">
    <property type="term" value="F:glutaminyl-tRNA synthase (glutamine-hydrolyzing) activity"/>
    <property type="evidence" value="ECO:0007669"/>
    <property type="project" value="UniProtKB-UniRule"/>
</dbReference>
<dbReference type="GO" id="GO:0006412">
    <property type="term" value="P:translation"/>
    <property type="evidence" value="ECO:0007669"/>
    <property type="project" value="UniProtKB-UniRule"/>
</dbReference>
<dbReference type="Gene3D" id="3.90.1300.10">
    <property type="entry name" value="Amidase signature (AS) domain"/>
    <property type="match status" value="1"/>
</dbReference>
<dbReference type="HAMAP" id="MF_00120">
    <property type="entry name" value="GatA"/>
    <property type="match status" value="1"/>
</dbReference>
<dbReference type="InterPro" id="IPR000120">
    <property type="entry name" value="Amidase"/>
</dbReference>
<dbReference type="InterPro" id="IPR020556">
    <property type="entry name" value="Amidase_CS"/>
</dbReference>
<dbReference type="InterPro" id="IPR023631">
    <property type="entry name" value="Amidase_dom"/>
</dbReference>
<dbReference type="InterPro" id="IPR036928">
    <property type="entry name" value="AS_sf"/>
</dbReference>
<dbReference type="InterPro" id="IPR004412">
    <property type="entry name" value="GatA"/>
</dbReference>
<dbReference type="NCBIfam" id="TIGR00132">
    <property type="entry name" value="gatA"/>
    <property type="match status" value="1"/>
</dbReference>
<dbReference type="PANTHER" id="PTHR11895:SF151">
    <property type="entry name" value="GLUTAMYL-TRNA(GLN) AMIDOTRANSFERASE SUBUNIT A"/>
    <property type="match status" value="1"/>
</dbReference>
<dbReference type="PANTHER" id="PTHR11895">
    <property type="entry name" value="TRANSAMIDASE"/>
    <property type="match status" value="1"/>
</dbReference>
<dbReference type="Pfam" id="PF01425">
    <property type="entry name" value="Amidase"/>
    <property type="match status" value="1"/>
</dbReference>
<dbReference type="SUPFAM" id="SSF75304">
    <property type="entry name" value="Amidase signature (AS) enzymes"/>
    <property type="match status" value="1"/>
</dbReference>
<dbReference type="PROSITE" id="PS00571">
    <property type="entry name" value="AMIDASES"/>
    <property type="match status" value="1"/>
</dbReference>
<reference key="1">
    <citation type="journal article" date="2009" name="PLoS Pathog.">
        <title>Molecular evolutionary consequences of niche restriction in Francisella tularensis, a facultative intracellular pathogen.</title>
        <authorList>
            <person name="Larsson P."/>
            <person name="Elfsmark D."/>
            <person name="Svensson K."/>
            <person name="Wikstroem P."/>
            <person name="Forsman M."/>
            <person name="Brettin T."/>
            <person name="Keim P."/>
            <person name="Johansson A."/>
        </authorList>
    </citation>
    <scope>NUCLEOTIDE SEQUENCE [LARGE SCALE GENOMIC DNA]</scope>
    <source>
        <strain>FSC147</strain>
    </source>
</reference>
<feature type="chain" id="PRO_1000095134" description="Glutamyl-tRNA(Gln) amidotransferase subunit A">
    <location>
        <begin position="1"/>
        <end position="481"/>
    </location>
</feature>
<feature type="active site" description="Charge relay system" evidence="1">
    <location>
        <position position="74"/>
    </location>
</feature>
<feature type="active site" description="Charge relay system" evidence="1">
    <location>
        <position position="149"/>
    </location>
</feature>
<feature type="active site" description="Acyl-ester intermediate" evidence="1">
    <location>
        <position position="173"/>
    </location>
</feature>
<comment type="function">
    <text evidence="1">Allows the formation of correctly charged Gln-tRNA(Gln) through the transamidation of misacylated Glu-tRNA(Gln) in organisms which lack glutaminyl-tRNA synthetase. The reaction takes place in the presence of glutamine and ATP through an activated gamma-phospho-Glu-tRNA(Gln).</text>
</comment>
<comment type="catalytic activity">
    <reaction evidence="1">
        <text>L-glutamyl-tRNA(Gln) + L-glutamine + ATP + H2O = L-glutaminyl-tRNA(Gln) + L-glutamate + ADP + phosphate + H(+)</text>
        <dbReference type="Rhea" id="RHEA:17521"/>
        <dbReference type="Rhea" id="RHEA-COMP:9681"/>
        <dbReference type="Rhea" id="RHEA-COMP:9684"/>
        <dbReference type="ChEBI" id="CHEBI:15377"/>
        <dbReference type="ChEBI" id="CHEBI:15378"/>
        <dbReference type="ChEBI" id="CHEBI:29985"/>
        <dbReference type="ChEBI" id="CHEBI:30616"/>
        <dbReference type="ChEBI" id="CHEBI:43474"/>
        <dbReference type="ChEBI" id="CHEBI:58359"/>
        <dbReference type="ChEBI" id="CHEBI:78520"/>
        <dbReference type="ChEBI" id="CHEBI:78521"/>
        <dbReference type="ChEBI" id="CHEBI:456216"/>
        <dbReference type="EC" id="6.3.5.7"/>
    </reaction>
</comment>
<comment type="subunit">
    <text evidence="1">Heterotrimer of A, B and C subunits.</text>
</comment>
<comment type="similarity">
    <text evidence="1">Belongs to the amidase family. GatA subfamily.</text>
</comment>
<keyword id="KW-0067">ATP-binding</keyword>
<keyword id="KW-0436">Ligase</keyword>
<keyword id="KW-0547">Nucleotide-binding</keyword>
<keyword id="KW-0648">Protein biosynthesis</keyword>
<sequence>MSYIKKLRARLDSGEISAVELTKEYLAKIKEQDKRINSVITLCEAEALKEAEDADAIISAGKQGLLTGIPILHKDLFCTKGIRTTAASKMLDNFVAPYDSTVTKNCKDQGMVTLGKLNMDEFAMGSTNEYSYYGAVSNPWDLERVPGGSSGGSAAAVAAGFAPISTGSDTGGSVRQPASFCGLTAMKPSYGSTSRFGMVAFASSFDQAGIFGHYAEDVALMLDAIAGECEFDSTCVGVKQNHFTQDLEKDISGKVIGVDESLIKDLPAQIQEAVSKTLDNFKKLGAEIKSVKVPDLKEALSTYYIITPAEAAANLARYDGIRYGYRNPEARDLDELYRKSRTDGFGAEVKRRIMIGNYVLASSQYDSYYNKSQQLRKVMTDQINQIFTQVDAIFMPASPSEAFKKGDKLDPVSAYLSDIYTIPANISGLPAIAFPIGFANNLPVGGQLMAKAFNDNILTQMVVQYQKHYGIEEFILQQARI</sequence>
<proteinExistence type="inferred from homology"/>
<accession>B2SEM6</accession>
<gene>
    <name evidence="1" type="primary">gatA</name>
    <name type="ordered locus">FTM_0084</name>
</gene>
<evidence type="ECO:0000255" key="1">
    <source>
        <dbReference type="HAMAP-Rule" id="MF_00120"/>
    </source>
</evidence>